<dbReference type="EC" id="2.4.1.182" evidence="1"/>
<dbReference type="EMBL" id="CP000507">
    <property type="protein sequence ID" value="ABL99359.1"/>
    <property type="molecule type" value="Genomic_DNA"/>
</dbReference>
<dbReference type="RefSeq" id="WP_011759268.1">
    <property type="nucleotide sequence ID" value="NC_008700.1"/>
</dbReference>
<dbReference type="SMR" id="A1S4Q3"/>
<dbReference type="STRING" id="326297.Sama_1152"/>
<dbReference type="CAZy" id="GT19">
    <property type="family name" value="Glycosyltransferase Family 19"/>
</dbReference>
<dbReference type="KEGG" id="saz:Sama_1152"/>
<dbReference type="eggNOG" id="COG0763">
    <property type="taxonomic scope" value="Bacteria"/>
</dbReference>
<dbReference type="HOGENOM" id="CLU_036577_3_0_6"/>
<dbReference type="OrthoDB" id="9801642at2"/>
<dbReference type="UniPathway" id="UPA00973"/>
<dbReference type="Proteomes" id="UP000009175">
    <property type="component" value="Chromosome"/>
</dbReference>
<dbReference type="GO" id="GO:0016020">
    <property type="term" value="C:membrane"/>
    <property type="evidence" value="ECO:0007669"/>
    <property type="project" value="GOC"/>
</dbReference>
<dbReference type="GO" id="GO:0008915">
    <property type="term" value="F:lipid-A-disaccharide synthase activity"/>
    <property type="evidence" value="ECO:0007669"/>
    <property type="project" value="UniProtKB-UniRule"/>
</dbReference>
<dbReference type="GO" id="GO:0005543">
    <property type="term" value="F:phospholipid binding"/>
    <property type="evidence" value="ECO:0007669"/>
    <property type="project" value="TreeGrafter"/>
</dbReference>
<dbReference type="GO" id="GO:0009245">
    <property type="term" value="P:lipid A biosynthetic process"/>
    <property type="evidence" value="ECO:0007669"/>
    <property type="project" value="UniProtKB-UniRule"/>
</dbReference>
<dbReference type="CDD" id="cd01635">
    <property type="entry name" value="Glycosyltransferase_GTB-type"/>
    <property type="match status" value="1"/>
</dbReference>
<dbReference type="HAMAP" id="MF_00392">
    <property type="entry name" value="LpxB"/>
    <property type="match status" value="1"/>
</dbReference>
<dbReference type="InterPro" id="IPR003835">
    <property type="entry name" value="Glyco_trans_19"/>
</dbReference>
<dbReference type="NCBIfam" id="TIGR00215">
    <property type="entry name" value="lpxB"/>
    <property type="match status" value="1"/>
</dbReference>
<dbReference type="PANTHER" id="PTHR30372">
    <property type="entry name" value="LIPID-A-DISACCHARIDE SYNTHASE"/>
    <property type="match status" value="1"/>
</dbReference>
<dbReference type="PANTHER" id="PTHR30372:SF4">
    <property type="entry name" value="LIPID-A-DISACCHARIDE SYNTHASE, MITOCHONDRIAL-RELATED"/>
    <property type="match status" value="1"/>
</dbReference>
<dbReference type="Pfam" id="PF02684">
    <property type="entry name" value="LpxB"/>
    <property type="match status" value="1"/>
</dbReference>
<dbReference type="SUPFAM" id="SSF53756">
    <property type="entry name" value="UDP-Glycosyltransferase/glycogen phosphorylase"/>
    <property type="match status" value="1"/>
</dbReference>
<proteinExistence type="inferred from homology"/>
<protein>
    <recommendedName>
        <fullName evidence="1">Lipid-A-disaccharide synthase</fullName>
        <ecNumber evidence="1">2.4.1.182</ecNumber>
    </recommendedName>
</protein>
<feature type="chain" id="PRO_1000049414" description="Lipid-A-disaccharide synthase">
    <location>
        <begin position="1"/>
        <end position="393"/>
    </location>
</feature>
<organism>
    <name type="scientific">Shewanella amazonensis (strain ATCC BAA-1098 / SB2B)</name>
    <dbReference type="NCBI Taxonomy" id="326297"/>
    <lineage>
        <taxon>Bacteria</taxon>
        <taxon>Pseudomonadati</taxon>
        <taxon>Pseudomonadota</taxon>
        <taxon>Gammaproteobacteria</taxon>
        <taxon>Alteromonadales</taxon>
        <taxon>Shewanellaceae</taxon>
        <taxon>Shewanella</taxon>
    </lineage>
</organism>
<comment type="function">
    <text evidence="1">Condensation of UDP-2,3-diacylglucosamine and 2,3-diacylglucosamine-1-phosphate to form lipid A disaccharide, a precursor of lipid A, a phosphorylated glycolipid that anchors the lipopolysaccharide to the outer membrane of the cell.</text>
</comment>
<comment type="catalytic activity">
    <reaction evidence="1">
        <text>a lipid X + a UDP-2-N,3-O-bis[(3R)-3-hydroxyacyl]-alpha-D-glucosamine = a lipid A disaccharide + UDP + H(+)</text>
        <dbReference type="Rhea" id="RHEA:67828"/>
        <dbReference type="ChEBI" id="CHEBI:15378"/>
        <dbReference type="ChEBI" id="CHEBI:58223"/>
        <dbReference type="ChEBI" id="CHEBI:137748"/>
        <dbReference type="ChEBI" id="CHEBI:176338"/>
        <dbReference type="ChEBI" id="CHEBI:176343"/>
        <dbReference type="EC" id="2.4.1.182"/>
    </reaction>
</comment>
<comment type="pathway">
    <text evidence="1">Bacterial outer membrane biogenesis; LPS lipid A biosynthesis.</text>
</comment>
<comment type="similarity">
    <text evidence="1">Belongs to the LpxB family.</text>
</comment>
<gene>
    <name evidence="1" type="primary">lpxB</name>
    <name type="ordered locus">Sama_1152</name>
</gene>
<evidence type="ECO:0000255" key="1">
    <source>
        <dbReference type="HAMAP-Rule" id="MF_00392"/>
    </source>
</evidence>
<reference key="1">
    <citation type="submission" date="2006-12" db="EMBL/GenBank/DDBJ databases">
        <title>Complete sequence of Shewanella amazonensis SB2B.</title>
        <authorList>
            <consortium name="US DOE Joint Genome Institute"/>
            <person name="Copeland A."/>
            <person name="Lucas S."/>
            <person name="Lapidus A."/>
            <person name="Barry K."/>
            <person name="Detter J.C."/>
            <person name="Glavina del Rio T."/>
            <person name="Hammon N."/>
            <person name="Israni S."/>
            <person name="Dalin E."/>
            <person name="Tice H."/>
            <person name="Pitluck S."/>
            <person name="Munk A.C."/>
            <person name="Brettin T."/>
            <person name="Bruce D."/>
            <person name="Han C."/>
            <person name="Tapia R."/>
            <person name="Gilna P."/>
            <person name="Schmutz J."/>
            <person name="Larimer F."/>
            <person name="Land M."/>
            <person name="Hauser L."/>
            <person name="Kyrpides N."/>
            <person name="Mikhailova N."/>
            <person name="Fredrickson J."/>
            <person name="Richardson P."/>
        </authorList>
    </citation>
    <scope>NUCLEOTIDE SEQUENCE [LARGE SCALE GENOMIC DNA]</scope>
    <source>
        <strain>ATCC BAA-1098 / SB2B</strain>
    </source>
</reference>
<name>LPXB_SHEAM</name>
<sequence length="393" mass="42993">MSQSKPLVFAMVAGELSGDILGAGLVKALKARHPDARFVGIGGPRMEALGFESLFAMEELAVMGIVEVLSRLPRLLKVRSSLVSQLLALKPDCFIGIDAPDFNIGVELKLKQQGIKTVHYVSPSVWAWRPKRIFKIAKATNMVLSLLPFEKAFYDQHQVPCTFVGHTLADDIPLELSKADARETLGLDRDAEYLAILPGSRGGELKMLSEPFIKAAVAIKEALPDVRFITPLVNEKRREQFLTALETHAPGLEIQLFDGQSREIMAASDGILLASGTATLEAMLVKRPMVVAYRVAPLTYSIASRMMLIKRYSLPNLLSGKDLVPELIQADCTPQKIASEVVAMMNRDNRALIAEFTEMHQNLRQNASERAADAVDVLIGANAPHGRSSNEVG</sequence>
<accession>A1S4Q3</accession>
<keyword id="KW-0328">Glycosyltransferase</keyword>
<keyword id="KW-0441">Lipid A biosynthesis</keyword>
<keyword id="KW-0444">Lipid biosynthesis</keyword>
<keyword id="KW-0443">Lipid metabolism</keyword>
<keyword id="KW-1185">Reference proteome</keyword>
<keyword id="KW-0808">Transferase</keyword>